<keyword id="KW-0963">Cytoplasm</keyword>
<keyword id="KW-0378">Hydrolase</keyword>
<keyword id="KW-1185">Reference proteome</keyword>
<keyword id="KW-0694">RNA-binding</keyword>
<keyword id="KW-0820">tRNA-binding</keyword>
<accession>B0TF85</accession>
<organism>
    <name type="scientific">Heliobacterium modesticaldum (strain ATCC 51547 / Ice1)</name>
    <dbReference type="NCBI Taxonomy" id="498761"/>
    <lineage>
        <taxon>Bacteria</taxon>
        <taxon>Bacillati</taxon>
        <taxon>Bacillota</taxon>
        <taxon>Clostridia</taxon>
        <taxon>Eubacteriales</taxon>
        <taxon>Heliobacteriaceae</taxon>
        <taxon>Heliomicrobium</taxon>
    </lineage>
</organism>
<proteinExistence type="inferred from homology"/>
<dbReference type="EC" id="3.1.1.96" evidence="1"/>
<dbReference type="EMBL" id="CP000930">
    <property type="protein sequence ID" value="ABZ84402.1"/>
    <property type="molecule type" value="Genomic_DNA"/>
</dbReference>
<dbReference type="RefSeq" id="WP_012282906.1">
    <property type="nucleotide sequence ID" value="NC_010337.2"/>
</dbReference>
<dbReference type="SMR" id="B0TF85"/>
<dbReference type="STRING" id="498761.HM1_1844"/>
<dbReference type="KEGG" id="hmo:HM1_1844"/>
<dbReference type="eggNOG" id="COG1490">
    <property type="taxonomic scope" value="Bacteria"/>
</dbReference>
<dbReference type="HOGENOM" id="CLU_076901_1_0_9"/>
<dbReference type="OrthoDB" id="9801395at2"/>
<dbReference type="Proteomes" id="UP000008550">
    <property type="component" value="Chromosome"/>
</dbReference>
<dbReference type="GO" id="GO:0005737">
    <property type="term" value="C:cytoplasm"/>
    <property type="evidence" value="ECO:0007669"/>
    <property type="project" value="UniProtKB-SubCell"/>
</dbReference>
<dbReference type="GO" id="GO:0051500">
    <property type="term" value="F:D-tyrosyl-tRNA(Tyr) deacylase activity"/>
    <property type="evidence" value="ECO:0007669"/>
    <property type="project" value="TreeGrafter"/>
</dbReference>
<dbReference type="GO" id="GO:0106026">
    <property type="term" value="F:Gly-tRNA(Ala) deacylase activity"/>
    <property type="evidence" value="ECO:0007669"/>
    <property type="project" value="UniProtKB-UniRule"/>
</dbReference>
<dbReference type="GO" id="GO:0043908">
    <property type="term" value="F:Ser(Gly)-tRNA(Ala) hydrolase activity"/>
    <property type="evidence" value="ECO:0007669"/>
    <property type="project" value="UniProtKB-UniRule"/>
</dbReference>
<dbReference type="GO" id="GO:0000049">
    <property type="term" value="F:tRNA binding"/>
    <property type="evidence" value="ECO:0007669"/>
    <property type="project" value="UniProtKB-UniRule"/>
</dbReference>
<dbReference type="GO" id="GO:0019478">
    <property type="term" value="P:D-amino acid catabolic process"/>
    <property type="evidence" value="ECO:0007669"/>
    <property type="project" value="UniProtKB-UniRule"/>
</dbReference>
<dbReference type="CDD" id="cd00563">
    <property type="entry name" value="Dtyr_deacylase"/>
    <property type="match status" value="1"/>
</dbReference>
<dbReference type="FunFam" id="3.50.80.10:FF:000001">
    <property type="entry name" value="D-aminoacyl-tRNA deacylase"/>
    <property type="match status" value="1"/>
</dbReference>
<dbReference type="Gene3D" id="3.50.80.10">
    <property type="entry name" value="D-tyrosyl-tRNA(Tyr) deacylase"/>
    <property type="match status" value="1"/>
</dbReference>
<dbReference type="HAMAP" id="MF_00518">
    <property type="entry name" value="Deacylase_Dtd"/>
    <property type="match status" value="1"/>
</dbReference>
<dbReference type="InterPro" id="IPR003732">
    <property type="entry name" value="Daa-tRNA_deacyls_DTD"/>
</dbReference>
<dbReference type="InterPro" id="IPR023509">
    <property type="entry name" value="DTD-like_sf"/>
</dbReference>
<dbReference type="NCBIfam" id="TIGR00256">
    <property type="entry name" value="D-aminoacyl-tRNA deacylase"/>
    <property type="match status" value="1"/>
</dbReference>
<dbReference type="PANTHER" id="PTHR10472:SF5">
    <property type="entry name" value="D-AMINOACYL-TRNA DEACYLASE 1"/>
    <property type="match status" value="1"/>
</dbReference>
<dbReference type="PANTHER" id="PTHR10472">
    <property type="entry name" value="D-TYROSYL-TRNA TYR DEACYLASE"/>
    <property type="match status" value="1"/>
</dbReference>
<dbReference type="Pfam" id="PF02580">
    <property type="entry name" value="Tyr_Deacylase"/>
    <property type="match status" value="1"/>
</dbReference>
<dbReference type="SUPFAM" id="SSF69500">
    <property type="entry name" value="DTD-like"/>
    <property type="match status" value="1"/>
</dbReference>
<evidence type="ECO:0000255" key="1">
    <source>
        <dbReference type="HAMAP-Rule" id="MF_00518"/>
    </source>
</evidence>
<feature type="chain" id="PRO_1000127542" description="D-aminoacyl-tRNA deacylase">
    <location>
        <begin position="1"/>
        <end position="150"/>
    </location>
</feature>
<feature type="short sequence motif" description="Gly-cisPro motif, important for rejection of L-amino acids" evidence="1">
    <location>
        <begin position="137"/>
        <end position="138"/>
    </location>
</feature>
<sequence length="150" mass="16047">MRALIQRVLRGRVTVEGSEVGAIGPGLVVLVGAGQGDGEADARYVAEKIAHLRIFEDEQGKMNRSVSDVGGEVLVVSQFTLYGDCRKGRRPSFTQAAPPDEARRLVEAVVAELRKFGLTVATGQFQAHMVVEIINDGPVTLMVEGRGGES</sequence>
<comment type="function">
    <text evidence="1">An aminoacyl-tRNA editing enzyme that deacylates mischarged D-aminoacyl-tRNAs. Also deacylates mischarged glycyl-tRNA(Ala), protecting cells against glycine mischarging by AlaRS. Acts via tRNA-based rather than protein-based catalysis; rejects L-amino acids rather than detecting D-amino acids in the active site. By recycling D-aminoacyl-tRNA to D-amino acids and free tRNA molecules, this enzyme counteracts the toxicity associated with the formation of D-aminoacyl-tRNA entities in vivo and helps enforce protein L-homochirality.</text>
</comment>
<comment type="catalytic activity">
    <reaction evidence="1">
        <text>glycyl-tRNA(Ala) + H2O = tRNA(Ala) + glycine + H(+)</text>
        <dbReference type="Rhea" id="RHEA:53744"/>
        <dbReference type="Rhea" id="RHEA-COMP:9657"/>
        <dbReference type="Rhea" id="RHEA-COMP:13640"/>
        <dbReference type="ChEBI" id="CHEBI:15377"/>
        <dbReference type="ChEBI" id="CHEBI:15378"/>
        <dbReference type="ChEBI" id="CHEBI:57305"/>
        <dbReference type="ChEBI" id="CHEBI:78442"/>
        <dbReference type="ChEBI" id="CHEBI:78522"/>
        <dbReference type="EC" id="3.1.1.96"/>
    </reaction>
</comment>
<comment type="catalytic activity">
    <reaction evidence="1">
        <text>a D-aminoacyl-tRNA + H2O = a tRNA + a D-alpha-amino acid + H(+)</text>
        <dbReference type="Rhea" id="RHEA:13953"/>
        <dbReference type="Rhea" id="RHEA-COMP:10123"/>
        <dbReference type="Rhea" id="RHEA-COMP:10124"/>
        <dbReference type="ChEBI" id="CHEBI:15377"/>
        <dbReference type="ChEBI" id="CHEBI:15378"/>
        <dbReference type="ChEBI" id="CHEBI:59871"/>
        <dbReference type="ChEBI" id="CHEBI:78442"/>
        <dbReference type="ChEBI" id="CHEBI:79333"/>
        <dbReference type="EC" id="3.1.1.96"/>
    </reaction>
</comment>
<comment type="subunit">
    <text evidence="1">Homodimer.</text>
</comment>
<comment type="subcellular location">
    <subcellularLocation>
        <location evidence="1">Cytoplasm</location>
    </subcellularLocation>
</comment>
<comment type="domain">
    <text evidence="1">A Gly-cisPro motif from one monomer fits into the active site of the other monomer to allow specific chiral rejection of L-amino acids.</text>
</comment>
<comment type="similarity">
    <text evidence="1">Belongs to the DTD family.</text>
</comment>
<reference key="1">
    <citation type="journal article" date="2008" name="J. Bacteriol.">
        <title>The genome of Heliobacterium modesticaldum, a phototrophic representative of the Firmicutes containing the simplest photosynthetic apparatus.</title>
        <authorList>
            <person name="Sattley W.M."/>
            <person name="Madigan M.T."/>
            <person name="Swingley W.D."/>
            <person name="Cheung P.C."/>
            <person name="Clocksin K.M."/>
            <person name="Conrad A.L."/>
            <person name="Dejesa L.C."/>
            <person name="Honchak B.M."/>
            <person name="Jung D.O."/>
            <person name="Karbach L.E."/>
            <person name="Kurdoglu A."/>
            <person name="Lahiri S."/>
            <person name="Mastrian S.D."/>
            <person name="Page L.E."/>
            <person name="Taylor H.L."/>
            <person name="Wang Z.T."/>
            <person name="Raymond J."/>
            <person name="Chen M."/>
            <person name="Blankenship R.E."/>
            <person name="Touchman J.W."/>
        </authorList>
    </citation>
    <scope>NUCLEOTIDE SEQUENCE [LARGE SCALE GENOMIC DNA]</scope>
    <source>
        <strain>ATCC 51547 / Ice1</strain>
    </source>
</reference>
<gene>
    <name evidence="1" type="primary">dtd</name>
    <name type="ordered locus">Helmi_17770</name>
    <name type="ORF">HM1_1844</name>
</gene>
<protein>
    <recommendedName>
        <fullName evidence="1">D-aminoacyl-tRNA deacylase</fullName>
        <shortName evidence="1">DTD</shortName>
        <ecNumber evidence="1">3.1.1.96</ecNumber>
    </recommendedName>
    <alternativeName>
        <fullName evidence="1">Gly-tRNA(Ala) deacylase</fullName>
    </alternativeName>
</protein>
<name>DTD_HELMI</name>